<accession>Q7N1U3</accession>
<name>Y3376_PHOLL</name>
<gene>
    <name type="ordered locus">plu3376</name>
</gene>
<sequence>MSDINVEVVYALPDRQYLRTVKLAQGSTVEQAIVASGLLTLRNDIDLQKNKLGVYSRPVKLTDILEEGDRVEIYRPLLADPKEMRRKRAERAKNNAQ</sequence>
<reference key="1">
    <citation type="journal article" date="2003" name="Nat. Biotechnol.">
        <title>The genome sequence of the entomopathogenic bacterium Photorhabdus luminescens.</title>
        <authorList>
            <person name="Duchaud E."/>
            <person name="Rusniok C."/>
            <person name="Frangeul L."/>
            <person name="Buchrieser C."/>
            <person name="Givaudan A."/>
            <person name="Taourit S."/>
            <person name="Bocs S."/>
            <person name="Boursaux-Eude C."/>
            <person name="Chandler M."/>
            <person name="Charles J.-F."/>
            <person name="Dassa E."/>
            <person name="Derose R."/>
            <person name="Derzelle S."/>
            <person name="Freyssinet G."/>
            <person name="Gaudriault S."/>
            <person name="Medigue C."/>
            <person name="Lanois A."/>
            <person name="Powell K."/>
            <person name="Siguier P."/>
            <person name="Vincent R."/>
            <person name="Wingate V."/>
            <person name="Zouine M."/>
            <person name="Glaser P."/>
            <person name="Boemare N."/>
            <person name="Danchin A."/>
            <person name="Kunst F."/>
        </authorList>
    </citation>
    <scope>NUCLEOTIDE SEQUENCE [LARGE SCALE GENOMIC DNA]</scope>
    <source>
        <strain>DSM 15139 / CIP 105565 / TT01</strain>
    </source>
</reference>
<feature type="chain" id="PRO_0000192495" description="UPF0125 protein plu3376">
    <location>
        <begin position="1"/>
        <end position="97"/>
    </location>
</feature>
<proteinExistence type="inferred from homology"/>
<evidence type="ECO:0000255" key="1">
    <source>
        <dbReference type="HAMAP-Rule" id="MF_00460"/>
    </source>
</evidence>
<organism>
    <name type="scientific">Photorhabdus laumondii subsp. laumondii (strain DSM 15139 / CIP 105565 / TT01)</name>
    <name type="common">Photorhabdus luminescens subsp. laumondii</name>
    <dbReference type="NCBI Taxonomy" id="243265"/>
    <lineage>
        <taxon>Bacteria</taxon>
        <taxon>Pseudomonadati</taxon>
        <taxon>Pseudomonadota</taxon>
        <taxon>Gammaproteobacteria</taxon>
        <taxon>Enterobacterales</taxon>
        <taxon>Morganellaceae</taxon>
        <taxon>Photorhabdus</taxon>
    </lineage>
</organism>
<keyword id="KW-1185">Reference proteome</keyword>
<comment type="similarity">
    <text evidence="1">Belongs to the UPF0125 (RnfH) family.</text>
</comment>
<dbReference type="EMBL" id="BX571870">
    <property type="protein sequence ID" value="CAE15750.1"/>
    <property type="molecule type" value="Genomic_DNA"/>
</dbReference>
<dbReference type="RefSeq" id="WP_011147560.1">
    <property type="nucleotide sequence ID" value="NC_005126.1"/>
</dbReference>
<dbReference type="SMR" id="Q7N1U3"/>
<dbReference type="STRING" id="243265.plu3376"/>
<dbReference type="GeneID" id="48849628"/>
<dbReference type="KEGG" id="plu:plu3376"/>
<dbReference type="eggNOG" id="COG2914">
    <property type="taxonomic scope" value="Bacteria"/>
</dbReference>
<dbReference type="HOGENOM" id="CLU_150721_1_0_6"/>
<dbReference type="OrthoDB" id="9796575at2"/>
<dbReference type="Proteomes" id="UP000002514">
    <property type="component" value="Chromosome"/>
</dbReference>
<dbReference type="Gene3D" id="3.10.20.280">
    <property type="entry name" value="RnfH-like"/>
    <property type="match status" value="1"/>
</dbReference>
<dbReference type="HAMAP" id="MF_00460">
    <property type="entry name" value="UPF0125_RnfH"/>
    <property type="match status" value="1"/>
</dbReference>
<dbReference type="InterPro" id="IPR016155">
    <property type="entry name" value="Mopterin_synth/thiamin_S_b"/>
</dbReference>
<dbReference type="InterPro" id="IPR005346">
    <property type="entry name" value="RnfH"/>
</dbReference>
<dbReference type="InterPro" id="IPR037021">
    <property type="entry name" value="RnfH_sf"/>
</dbReference>
<dbReference type="NCBIfam" id="NF002490">
    <property type="entry name" value="PRK01777.1"/>
    <property type="match status" value="1"/>
</dbReference>
<dbReference type="PANTHER" id="PTHR37483">
    <property type="entry name" value="UPF0125 PROTEIN RATB"/>
    <property type="match status" value="1"/>
</dbReference>
<dbReference type="PANTHER" id="PTHR37483:SF1">
    <property type="entry name" value="UPF0125 PROTEIN RATB"/>
    <property type="match status" value="1"/>
</dbReference>
<dbReference type="Pfam" id="PF03658">
    <property type="entry name" value="Ub-RnfH"/>
    <property type="match status" value="1"/>
</dbReference>
<dbReference type="SUPFAM" id="SSF54285">
    <property type="entry name" value="MoaD/ThiS"/>
    <property type="match status" value="1"/>
</dbReference>
<protein>
    <recommendedName>
        <fullName evidence="1">UPF0125 protein plu3376</fullName>
    </recommendedName>
</protein>